<feature type="chain" id="PRO_1000006509" description="tRNA (guanine-N(1)-)-methyltransferase">
    <location>
        <begin position="1"/>
        <end position="234"/>
    </location>
</feature>
<feature type="binding site" evidence="1">
    <location>
        <position position="115"/>
    </location>
    <ligand>
        <name>S-adenosyl-L-methionine</name>
        <dbReference type="ChEBI" id="CHEBI:59789"/>
    </ligand>
</feature>
<feature type="binding site" evidence="1">
    <location>
        <begin position="135"/>
        <end position="140"/>
    </location>
    <ligand>
        <name>S-adenosyl-L-methionine</name>
        <dbReference type="ChEBI" id="CHEBI:59789"/>
    </ligand>
</feature>
<accession>A8GM73</accession>
<comment type="function">
    <text evidence="1">Specifically methylates guanosine-37 in various tRNAs.</text>
</comment>
<comment type="catalytic activity">
    <reaction evidence="1">
        <text>guanosine(37) in tRNA + S-adenosyl-L-methionine = N(1)-methylguanosine(37) in tRNA + S-adenosyl-L-homocysteine + H(+)</text>
        <dbReference type="Rhea" id="RHEA:36899"/>
        <dbReference type="Rhea" id="RHEA-COMP:10145"/>
        <dbReference type="Rhea" id="RHEA-COMP:10147"/>
        <dbReference type="ChEBI" id="CHEBI:15378"/>
        <dbReference type="ChEBI" id="CHEBI:57856"/>
        <dbReference type="ChEBI" id="CHEBI:59789"/>
        <dbReference type="ChEBI" id="CHEBI:73542"/>
        <dbReference type="ChEBI" id="CHEBI:74269"/>
        <dbReference type="EC" id="2.1.1.228"/>
    </reaction>
</comment>
<comment type="subunit">
    <text evidence="1">Homodimer.</text>
</comment>
<comment type="subcellular location">
    <subcellularLocation>
        <location evidence="1">Cytoplasm</location>
    </subcellularLocation>
</comment>
<comment type="similarity">
    <text evidence="1">Belongs to the RNA methyltransferase TrmD family.</text>
</comment>
<dbReference type="EC" id="2.1.1.228" evidence="1"/>
<dbReference type="EMBL" id="CP000847">
    <property type="protein sequence ID" value="ABV74498.1"/>
    <property type="molecule type" value="Genomic_DNA"/>
</dbReference>
<dbReference type="RefSeq" id="WP_012013368.1">
    <property type="nucleotide sequence ID" value="NC_009881.1"/>
</dbReference>
<dbReference type="SMR" id="A8GM73"/>
<dbReference type="STRING" id="293614.A1C_00840"/>
<dbReference type="KEGG" id="rak:A1C_00840"/>
<dbReference type="eggNOG" id="COG0336">
    <property type="taxonomic scope" value="Bacteria"/>
</dbReference>
<dbReference type="HOGENOM" id="CLU_047363_0_1_5"/>
<dbReference type="Proteomes" id="UP000006830">
    <property type="component" value="Chromosome"/>
</dbReference>
<dbReference type="GO" id="GO:0005829">
    <property type="term" value="C:cytosol"/>
    <property type="evidence" value="ECO:0007669"/>
    <property type="project" value="TreeGrafter"/>
</dbReference>
<dbReference type="GO" id="GO:0052906">
    <property type="term" value="F:tRNA (guanine(37)-N1)-methyltransferase activity"/>
    <property type="evidence" value="ECO:0007669"/>
    <property type="project" value="UniProtKB-UniRule"/>
</dbReference>
<dbReference type="GO" id="GO:0002939">
    <property type="term" value="P:tRNA N1-guanine methylation"/>
    <property type="evidence" value="ECO:0007669"/>
    <property type="project" value="TreeGrafter"/>
</dbReference>
<dbReference type="CDD" id="cd18080">
    <property type="entry name" value="TrmD-like"/>
    <property type="match status" value="1"/>
</dbReference>
<dbReference type="Gene3D" id="3.40.1280.10">
    <property type="match status" value="1"/>
</dbReference>
<dbReference type="Gene3D" id="1.10.1270.20">
    <property type="entry name" value="tRNA(m1g37)methyltransferase, domain 2"/>
    <property type="match status" value="1"/>
</dbReference>
<dbReference type="HAMAP" id="MF_00605">
    <property type="entry name" value="TrmD"/>
    <property type="match status" value="1"/>
</dbReference>
<dbReference type="InterPro" id="IPR029028">
    <property type="entry name" value="Alpha/beta_knot_MTases"/>
</dbReference>
<dbReference type="InterPro" id="IPR023148">
    <property type="entry name" value="tRNA_m1G_MeTrfase_C_sf"/>
</dbReference>
<dbReference type="InterPro" id="IPR002649">
    <property type="entry name" value="tRNA_m1G_MeTrfase_TrmD"/>
</dbReference>
<dbReference type="InterPro" id="IPR029026">
    <property type="entry name" value="tRNA_m1G_MTases_N"/>
</dbReference>
<dbReference type="InterPro" id="IPR016009">
    <property type="entry name" value="tRNA_MeTrfase_TRMD/TRM10"/>
</dbReference>
<dbReference type="NCBIfam" id="NF000648">
    <property type="entry name" value="PRK00026.1"/>
    <property type="match status" value="1"/>
</dbReference>
<dbReference type="NCBIfam" id="TIGR00088">
    <property type="entry name" value="trmD"/>
    <property type="match status" value="1"/>
</dbReference>
<dbReference type="PANTHER" id="PTHR46417">
    <property type="entry name" value="TRNA (GUANINE-N(1)-)-METHYLTRANSFERASE"/>
    <property type="match status" value="1"/>
</dbReference>
<dbReference type="PANTHER" id="PTHR46417:SF1">
    <property type="entry name" value="TRNA (GUANINE-N(1)-)-METHYLTRANSFERASE"/>
    <property type="match status" value="1"/>
</dbReference>
<dbReference type="Pfam" id="PF01746">
    <property type="entry name" value="tRNA_m1G_MT"/>
    <property type="match status" value="1"/>
</dbReference>
<dbReference type="PIRSF" id="PIRSF000386">
    <property type="entry name" value="tRNA_mtase"/>
    <property type="match status" value="1"/>
</dbReference>
<dbReference type="SUPFAM" id="SSF75217">
    <property type="entry name" value="alpha/beta knot"/>
    <property type="match status" value="1"/>
</dbReference>
<reference key="1">
    <citation type="submission" date="2007-09" db="EMBL/GenBank/DDBJ databases">
        <title>Complete genome sequence of Rickettsia akari.</title>
        <authorList>
            <person name="Madan A."/>
            <person name="Fahey J."/>
            <person name="Helton E."/>
            <person name="Ketteman M."/>
            <person name="Madan A."/>
            <person name="Rodrigues S."/>
            <person name="Sanchez A."/>
            <person name="Whiting M."/>
            <person name="Dasch G."/>
            <person name="Eremeeva M."/>
        </authorList>
    </citation>
    <scope>NUCLEOTIDE SEQUENCE [LARGE SCALE GENOMIC DNA]</scope>
    <source>
        <strain>Hartford</strain>
    </source>
</reference>
<proteinExistence type="inferred from homology"/>
<gene>
    <name evidence="1" type="primary">trmD</name>
    <name type="ordered locus">A1C_00840</name>
</gene>
<organism>
    <name type="scientific">Rickettsia akari (strain Hartford)</name>
    <dbReference type="NCBI Taxonomy" id="293614"/>
    <lineage>
        <taxon>Bacteria</taxon>
        <taxon>Pseudomonadati</taxon>
        <taxon>Pseudomonadota</taxon>
        <taxon>Alphaproteobacteria</taxon>
        <taxon>Rickettsiales</taxon>
        <taxon>Rickettsiaceae</taxon>
        <taxon>Rickettsieae</taxon>
        <taxon>Rickettsia</taxon>
        <taxon>spotted fever group</taxon>
    </lineage>
</organism>
<name>TRMD_RICAH</name>
<evidence type="ECO:0000255" key="1">
    <source>
        <dbReference type="HAMAP-Rule" id="MF_00605"/>
    </source>
</evidence>
<protein>
    <recommendedName>
        <fullName evidence="1">tRNA (guanine-N(1)-)-methyltransferase</fullName>
        <ecNumber evidence="1">2.1.1.228</ecNumber>
    </recommendedName>
    <alternativeName>
        <fullName evidence="1">M1G-methyltransferase</fullName>
    </alternativeName>
    <alternativeName>
        <fullName evidence="1">tRNA [GM37] methyltransferase</fullName>
    </alternativeName>
</protein>
<keyword id="KW-0963">Cytoplasm</keyword>
<keyword id="KW-0489">Methyltransferase</keyword>
<keyword id="KW-0949">S-adenosyl-L-methionine</keyword>
<keyword id="KW-0808">Transferase</keyword>
<keyword id="KW-0819">tRNA processing</keyword>
<sequence length="234" mass="26305">MSILHATILTVFPEMFPGTLGDSLAGQALKKNIWSYDVINIRDFGLTKHKNVDDEAYGGGDGLIMRPDVLGNAIEHALSLNPNASIYYPSPRGRVFTQSFTKEMLKNKNLIFLCGRYEGIDERVIEEYNVEEISVGDYILSGGEIPTLAILDCLIRLLPGVLMNQNTLSSESFEEDGEFKGGLECSLYTRPKIWRGRAVPSVLLSGNHKLINEWKKEQSRMITKLRRPELLKDL</sequence>